<gene>
    <name evidence="1" type="primary">gcvP2</name>
    <name type="ordered locus">CPS_3846</name>
</gene>
<protein>
    <recommendedName>
        <fullName evidence="1">Glycine dehydrogenase (decarboxylating) 2</fullName>
        <ecNumber evidence="1">1.4.4.2</ecNumber>
    </recommendedName>
    <alternativeName>
        <fullName evidence="1">Glycine cleavage system P-protein 2</fullName>
    </alternativeName>
    <alternativeName>
        <fullName evidence="1">Glycine decarboxylase 2</fullName>
    </alternativeName>
    <alternativeName>
        <fullName evidence="1">Glycine dehydrogenase (aminomethyl-transferring) 2</fullName>
    </alternativeName>
</protein>
<accession>Q47XG2</accession>
<sequence length="956" mass="105128">MTNNNLLAQLNDNLDFISRHNGPDRTQQQHMLDTLKVDSIEQMIDKTVPDNIRLLQPMALAKPQSEIEMLATLKGIASKNKVNRSYIGQGYYDTHVPHVILRNVFENPGWYTAYTPYQPEISQGRLEALLNFQQMITDLTAMELSNASLLDEATAAAEAMSLCKRASKNKSNVFFVSDDVHPQTLDVINTRAKYFSFEVVVAPCSELENHDVFGALLQYPGTTGQVHNLEKIIEQAHSKKTLVAVAADLLALTVLKAPGEMGADVVIGSAQRFGVPMGYGGPHAAFMATKEKYKRTIPGRVIGVSIDSKGKPALRMAMQTREQHIRREKANSNICTAQALLANMASFYAVYHGPQGLRKMGRRVNRLTSVLAAGLQKAGIELVHNDFFDTITLQTNEKTDAIYQRALAADLNLRLLPDQLGISLDETTTSADVEALWLAITEQSFNVDDIEQTLSAEFCNIPADCQRTSEYLSHPVFNSYHSETRMLRYLKSLENKDFSLTHGMIPLGSCTMKLNATAQMIPVTWPEFSRMHPFAPSDQCTGYETLAESFSDMLIEITGYDAFSLQPNSGAQGEYAGLIAIQRYHASRGEDYRNICLIPSSAHGTNPASASMVSMRIVLVNCDKEGNVDLDDLKEKINLHRDQLSAMMITYPSTHGVYEESIKEICELIHEAGGQVYLDGANMNAQVGLTSPGFIGADVSHLNLHKTFCIPHGGGGPGMGPIGVKSHLADFLPGHSVTNTVGAVSATALGSASILPISWAYIALMGAEGLKSATELAILNANYIMEKLSPHYPILFRGKQGRVAHECIIDLRPLKESSGISEEDVAKRLMDFGFHAPTMSFPVAGTLMIEPTESESLEELDKFIDALITIRHEIAKVEEGTWTLADNPLVNAPHTLNDLTGSDWPRAYSRLTACYPSSCPSQPKFWPTTNRIDNVYGDRNLICSCPPIESYQSTDT</sequence>
<proteinExistence type="inferred from homology"/>
<reference key="1">
    <citation type="journal article" date="2005" name="Proc. Natl. Acad. Sci. U.S.A.">
        <title>The psychrophilic lifestyle as revealed by the genome sequence of Colwellia psychrerythraea 34H through genomic and proteomic analyses.</title>
        <authorList>
            <person name="Methe B.A."/>
            <person name="Nelson K.E."/>
            <person name="Deming J.W."/>
            <person name="Momen B."/>
            <person name="Melamud E."/>
            <person name="Zhang X."/>
            <person name="Moult J."/>
            <person name="Madupu R."/>
            <person name="Nelson W.C."/>
            <person name="Dodson R.J."/>
            <person name="Brinkac L.M."/>
            <person name="Daugherty S.C."/>
            <person name="Durkin A.S."/>
            <person name="DeBoy R.T."/>
            <person name="Kolonay J.F."/>
            <person name="Sullivan S.A."/>
            <person name="Zhou L."/>
            <person name="Davidsen T.M."/>
            <person name="Wu M."/>
            <person name="Huston A.L."/>
            <person name="Lewis M."/>
            <person name="Weaver B."/>
            <person name="Weidman J.F."/>
            <person name="Khouri H."/>
            <person name="Utterback T.R."/>
            <person name="Feldblyum T.V."/>
            <person name="Fraser C.M."/>
        </authorList>
    </citation>
    <scope>NUCLEOTIDE SEQUENCE [LARGE SCALE GENOMIC DNA]</scope>
    <source>
        <strain>34H / ATCC BAA-681</strain>
    </source>
</reference>
<feature type="chain" id="PRO_0000227101" description="Glycine dehydrogenase (decarboxylating) 2">
    <location>
        <begin position="1"/>
        <end position="956"/>
    </location>
</feature>
<feature type="modified residue" description="N6-(pyridoxal phosphate)lysine" evidence="1">
    <location>
        <position position="706"/>
    </location>
</feature>
<name>GCSP2_COLP3</name>
<comment type="function">
    <text evidence="1">The glycine cleavage system catalyzes the degradation of glycine. The P protein binds the alpha-amino group of glycine through its pyridoxal phosphate cofactor; CO(2) is released and the remaining methylamine moiety is then transferred to the lipoamide cofactor of the H protein.</text>
</comment>
<comment type="catalytic activity">
    <reaction evidence="1">
        <text>N(6)-[(R)-lipoyl]-L-lysyl-[glycine-cleavage complex H protein] + glycine + H(+) = N(6)-[(R)-S(8)-aminomethyldihydrolipoyl]-L-lysyl-[glycine-cleavage complex H protein] + CO2</text>
        <dbReference type="Rhea" id="RHEA:24304"/>
        <dbReference type="Rhea" id="RHEA-COMP:10494"/>
        <dbReference type="Rhea" id="RHEA-COMP:10495"/>
        <dbReference type="ChEBI" id="CHEBI:15378"/>
        <dbReference type="ChEBI" id="CHEBI:16526"/>
        <dbReference type="ChEBI" id="CHEBI:57305"/>
        <dbReference type="ChEBI" id="CHEBI:83099"/>
        <dbReference type="ChEBI" id="CHEBI:83143"/>
        <dbReference type="EC" id="1.4.4.2"/>
    </reaction>
</comment>
<comment type="cofactor">
    <cofactor evidence="1">
        <name>pyridoxal 5'-phosphate</name>
        <dbReference type="ChEBI" id="CHEBI:597326"/>
    </cofactor>
</comment>
<comment type="subunit">
    <text evidence="1">The glycine cleavage system is composed of four proteins: P, T, L and H.</text>
</comment>
<comment type="similarity">
    <text evidence="1">Belongs to the GcvP family.</text>
</comment>
<dbReference type="EC" id="1.4.4.2" evidence="1"/>
<dbReference type="EMBL" id="CP000083">
    <property type="protein sequence ID" value="AAZ27773.1"/>
    <property type="molecule type" value="Genomic_DNA"/>
</dbReference>
<dbReference type="RefSeq" id="WP_011044594.1">
    <property type="nucleotide sequence ID" value="NC_003910.7"/>
</dbReference>
<dbReference type="SMR" id="Q47XG2"/>
<dbReference type="STRING" id="167879.CPS_3846"/>
<dbReference type="KEGG" id="cps:CPS_3846"/>
<dbReference type="eggNOG" id="COG0403">
    <property type="taxonomic scope" value="Bacteria"/>
</dbReference>
<dbReference type="eggNOG" id="COG1003">
    <property type="taxonomic scope" value="Bacteria"/>
</dbReference>
<dbReference type="HOGENOM" id="CLU_004620_3_2_6"/>
<dbReference type="Proteomes" id="UP000000547">
    <property type="component" value="Chromosome"/>
</dbReference>
<dbReference type="GO" id="GO:0005829">
    <property type="term" value="C:cytosol"/>
    <property type="evidence" value="ECO:0007669"/>
    <property type="project" value="TreeGrafter"/>
</dbReference>
<dbReference type="GO" id="GO:0005960">
    <property type="term" value="C:glycine cleavage complex"/>
    <property type="evidence" value="ECO:0007669"/>
    <property type="project" value="TreeGrafter"/>
</dbReference>
<dbReference type="GO" id="GO:0016594">
    <property type="term" value="F:glycine binding"/>
    <property type="evidence" value="ECO:0007669"/>
    <property type="project" value="TreeGrafter"/>
</dbReference>
<dbReference type="GO" id="GO:0004375">
    <property type="term" value="F:glycine dehydrogenase (decarboxylating) activity"/>
    <property type="evidence" value="ECO:0007669"/>
    <property type="project" value="UniProtKB-EC"/>
</dbReference>
<dbReference type="GO" id="GO:0030170">
    <property type="term" value="F:pyridoxal phosphate binding"/>
    <property type="evidence" value="ECO:0007669"/>
    <property type="project" value="TreeGrafter"/>
</dbReference>
<dbReference type="GO" id="GO:0019464">
    <property type="term" value="P:glycine decarboxylation via glycine cleavage system"/>
    <property type="evidence" value="ECO:0007669"/>
    <property type="project" value="UniProtKB-UniRule"/>
</dbReference>
<dbReference type="CDD" id="cd00613">
    <property type="entry name" value="GDC-P"/>
    <property type="match status" value="2"/>
</dbReference>
<dbReference type="FunFam" id="3.40.640.10:FF:000005">
    <property type="entry name" value="Glycine dehydrogenase (decarboxylating), mitochondrial"/>
    <property type="match status" value="1"/>
</dbReference>
<dbReference type="FunFam" id="3.90.1150.10:FF:000007">
    <property type="entry name" value="Glycine dehydrogenase (decarboxylating), mitochondrial"/>
    <property type="match status" value="1"/>
</dbReference>
<dbReference type="FunFam" id="3.40.640.10:FF:000007">
    <property type="entry name" value="glycine dehydrogenase (Decarboxylating), mitochondrial"/>
    <property type="match status" value="1"/>
</dbReference>
<dbReference type="Gene3D" id="3.90.1150.10">
    <property type="entry name" value="Aspartate Aminotransferase, domain 1"/>
    <property type="match status" value="2"/>
</dbReference>
<dbReference type="Gene3D" id="3.40.640.10">
    <property type="entry name" value="Type I PLP-dependent aspartate aminotransferase-like (Major domain)"/>
    <property type="match status" value="2"/>
</dbReference>
<dbReference type="HAMAP" id="MF_00711">
    <property type="entry name" value="GcvP"/>
    <property type="match status" value="1"/>
</dbReference>
<dbReference type="InterPro" id="IPR003437">
    <property type="entry name" value="GcvP"/>
</dbReference>
<dbReference type="InterPro" id="IPR049316">
    <property type="entry name" value="GDC-P_C"/>
</dbReference>
<dbReference type="InterPro" id="IPR049315">
    <property type="entry name" value="GDC-P_N"/>
</dbReference>
<dbReference type="InterPro" id="IPR020581">
    <property type="entry name" value="GDC_P"/>
</dbReference>
<dbReference type="InterPro" id="IPR015424">
    <property type="entry name" value="PyrdxlP-dep_Trfase"/>
</dbReference>
<dbReference type="InterPro" id="IPR015421">
    <property type="entry name" value="PyrdxlP-dep_Trfase_major"/>
</dbReference>
<dbReference type="InterPro" id="IPR015422">
    <property type="entry name" value="PyrdxlP-dep_Trfase_small"/>
</dbReference>
<dbReference type="NCBIfam" id="TIGR00461">
    <property type="entry name" value="gcvP"/>
    <property type="match status" value="1"/>
</dbReference>
<dbReference type="PANTHER" id="PTHR11773:SF13">
    <property type="entry name" value="GLYCINE DEHYDROGENASE (DECARBOXYLATING)"/>
    <property type="match status" value="1"/>
</dbReference>
<dbReference type="PANTHER" id="PTHR11773">
    <property type="entry name" value="GLYCINE DEHYDROGENASE, DECARBOXYLATING"/>
    <property type="match status" value="1"/>
</dbReference>
<dbReference type="Pfam" id="PF21478">
    <property type="entry name" value="GcvP2_C"/>
    <property type="match status" value="1"/>
</dbReference>
<dbReference type="Pfam" id="PF02347">
    <property type="entry name" value="GDC-P"/>
    <property type="match status" value="2"/>
</dbReference>
<dbReference type="SUPFAM" id="SSF53383">
    <property type="entry name" value="PLP-dependent transferases"/>
    <property type="match status" value="2"/>
</dbReference>
<evidence type="ECO:0000255" key="1">
    <source>
        <dbReference type="HAMAP-Rule" id="MF_00711"/>
    </source>
</evidence>
<organism>
    <name type="scientific">Colwellia psychrerythraea (strain 34H / ATCC BAA-681)</name>
    <name type="common">Vibrio psychroerythus</name>
    <dbReference type="NCBI Taxonomy" id="167879"/>
    <lineage>
        <taxon>Bacteria</taxon>
        <taxon>Pseudomonadati</taxon>
        <taxon>Pseudomonadota</taxon>
        <taxon>Gammaproteobacteria</taxon>
        <taxon>Alteromonadales</taxon>
        <taxon>Colwelliaceae</taxon>
        <taxon>Colwellia</taxon>
    </lineage>
</organism>
<keyword id="KW-0560">Oxidoreductase</keyword>
<keyword id="KW-0663">Pyridoxal phosphate</keyword>